<keyword id="KW-0963">Cytoplasm</keyword>
<keyword id="KW-1185">Reference proteome</keyword>
<keyword id="KW-0694">RNA-binding</keyword>
<organism>
    <name type="scientific">Mycoplasma mobile (strain ATCC 43663 / 163K / NCTC 11711)</name>
    <name type="common">Mesomycoplasma mobile</name>
    <dbReference type="NCBI Taxonomy" id="267748"/>
    <lineage>
        <taxon>Bacteria</taxon>
        <taxon>Bacillati</taxon>
        <taxon>Mycoplasmatota</taxon>
        <taxon>Mycoplasmoidales</taxon>
        <taxon>Metamycoplasmataceae</taxon>
        <taxon>Mesomycoplasma</taxon>
    </lineage>
</organism>
<reference key="1">
    <citation type="journal article" date="2004" name="Genome Res.">
        <title>The complete genome and proteome of Mycoplasma mobile.</title>
        <authorList>
            <person name="Jaffe J.D."/>
            <person name="Stange-Thomann N."/>
            <person name="Smith C."/>
            <person name="DeCaprio D."/>
            <person name="Fisher S."/>
            <person name="Butler J."/>
            <person name="Calvo S."/>
            <person name="Elkins T."/>
            <person name="FitzGerald M.G."/>
            <person name="Hafez N."/>
            <person name="Kodira C.D."/>
            <person name="Major J."/>
            <person name="Wang S."/>
            <person name="Wilkinson J."/>
            <person name="Nicol R."/>
            <person name="Nusbaum C."/>
            <person name="Birren B."/>
            <person name="Berg H.C."/>
            <person name="Church G.M."/>
        </authorList>
    </citation>
    <scope>NUCLEOTIDE SEQUENCE [LARGE SCALE GENOMIC DNA]</scope>
    <source>
        <strain>ATCC 43663 / NCTC 11711 / 163 K</strain>
    </source>
</reference>
<feature type="chain" id="PRO_0000102985" description="SsrA-binding protein">
    <location>
        <begin position="1"/>
        <end position="142"/>
    </location>
</feature>
<comment type="function">
    <text evidence="1">Required for rescue of stalled ribosomes mediated by trans-translation. Binds to transfer-messenger RNA (tmRNA), required for stable association of tmRNA with ribosomes. tmRNA and SmpB together mimic tRNA shape, replacing the anticodon stem-loop with SmpB. tmRNA is encoded by the ssrA gene; the 2 termini fold to resemble tRNA(Ala) and it encodes a 'tag peptide', a short internal open reading frame. During trans-translation Ala-aminoacylated tmRNA acts like a tRNA, entering the A-site of stalled ribosomes, displacing the stalled mRNA. The ribosome then switches to translate the ORF on the tmRNA; the nascent peptide is terminated with the 'tag peptide' encoded by the tmRNA and targeted for degradation. The ribosome is freed to recommence translation, which seems to be the essential function of trans-translation.</text>
</comment>
<comment type="subcellular location">
    <subcellularLocation>
        <location evidence="1">Cytoplasm</location>
    </subcellularLocation>
    <text evidence="1">The tmRNA-SmpB complex associates with stalled 70S ribosomes.</text>
</comment>
<comment type="similarity">
    <text evidence="1">Belongs to the SmpB family.</text>
</comment>
<name>SSRP_MYCM1</name>
<accession>Q6KI26</accession>
<dbReference type="EMBL" id="AE017308">
    <property type="protein sequence ID" value="AAT27750.1"/>
    <property type="molecule type" value="Genomic_DNA"/>
</dbReference>
<dbReference type="RefSeq" id="WP_011264784.1">
    <property type="nucleotide sequence ID" value="NC_006908.1"/>
</dbReference>
<dbReference type="SMR" id="Q6KI26"/>
<dbReference type="STRING" id="267748.MMOB2640"/>
<dbReference type="KEGG" id="mmo:MMOB2640"/>
<dbReference type="eggNOG" id="COG0691">
    <property type="taxonomic scope" value="Bacteria"/>
</dbReference>
<dbReference type="HOGENOM" id="CLU_108953_3_1_14"/>
<dbReference type="OrthoDB" id="9805462at2"/>
<dbReference type="Proteomes" id="UP000009072">
    <property type="component" value="Chromosome"/>
</dbReference>
<dbReference type="GO" id="GO:0005829">
    <property type="term" value="C:cytosol"/>
    <property type="evidence" value="ECO:0007669"/>
    <property type="project" value="TreeGrafter"/>
</dbReference>
<dbReference type="GO" id="GO:0003723">
    <property type="term" value="F:RNA binding"/>
    <property type="evidence" value="ECO:0007669"/>
    <property type="project" value="UniProtKB-UniRule"/>
</dbReference>
<dbReference type="GO" id="GO:0070929">
    <property type="term" value="P:trans-translation"/>
    <property type="evidence" value="ECO:0007669"/>
    <property type="project" value="UniProtKB-UniRule"/>
</dbReference>
<dbReference type="CDD" id="cd09294">
    <property type="entry name" value="SmpB"/>
    <property type="match status" value="1"/>
</dbReference>
<dbReference type="Gene3D" id="2.40.280.10">
    <property type="match status" value="1"/>
</dbReference>
<dbReference type="HAMAP" id="MF_00023">
    <property type="entry name" value="SmpB"/>
    <property type="match status" value="1"/>
</dbReference>
<dbReference type="InterPro" id="IPR023620">
    <property type="entry name" value="SmpB"/>
</dbReference>
<dbReference type="InterPro" id="IPR000037">
    <property type="entry name" value="SsrA-bd_prot"/>
</dbReference>
<dbReference type="InterPro" id="IPR020081">
    <property type="entry name" value="SsrA-bd_prot_CS"/>
</dbReference>
<dbReference type="NCBIfam" id="NF003843">
    <property type="entry name" value="PRK05422.1"/>
    <property type="match status" value="1"/>
</dbReference>
<dbReference type="NCBIfam" id="TIGR00086">
    <property type="entry name" value="smpB"/>
    <property type="match status" value="1"/>
</dbReference>
<dbReference type="PANTHER" id="PTHR30308:SF2">
    <property type="entry name" value="SSRA-BINDING PROTEIN"/>
    <property type="match status" value="1"/>
</dbReference>
<dbReference type="PANTHER" id="PTHR30308">
    <property type="entry name" value="TMRNA-BINDING COMPONENT OF TRANS-TRANSLATION TAGGING COMPLEX"/>
    <property type="match status" value="1"/>
</dbReference>
<dbReference type="Pfam" id="PF01668">
    <property type="entry name" value="SmpB"/>
    <property type="match status" value="1"/>
</dbReference>
<dbReference type="SUPFAM" id="SSF74982">
    <property type="entry name" value="Small protein B (SmpB)"/>
    <property type="match status" value="1"/>
</dbReference>
<dbReference type="PROSITE" id="PS01317">
    <property type="entry name" value="SSRP"/>
    <property type="match status" value="1"/>
</dbReference>
<proteinExistence type="inferred from homology"/>
<sequence length="142" mass="16894">MKIIIKNKDAFFNYEILEKYKAGLILKGWEVKSIRENKVQLKGAFITFKNDEAYITNMHISQYMSVKGNELEPRKLLLNKHEIRHIQDKKNRNSLAVIPLNLFWDNNYIKLEIALAKGKTKADKRHRILEKDVRKHLKKITY</sequence>
<gene>
    <name evidence="1" type="primary">smpB</name>
    <name type="ordered locus">MMOB2640</name>
</gene>
<evidence type="ECO:0000255" key="1">
    <source>
        <dbReference type="HAMAP-Rule" id="MF_00023"/>
    </source>
</evidence>
<protein>
    <recommendedName>
        <fullName evidence="1">SsrA-binding protein</fullName>
    </recommendedName>
    <alternativeName>
        <fullName evidence="1">Small protein B</fullName>
    </alternativeName>
</protein>